<evidence type="ECO:0000250" key="1">
    <source>
        <dbReference type="UniProtKB" id="P11766"/>
    </source>
</evidence>
<evidence type="ECO:0000269" key="2">
    <source>
    </source>
</evidence>
<evidence type="ECO:0000269" key="3">
    <source>
    </source>
</evidence>
<evidence type="ECO:0000305" key="4"/>
<keyword id="KW-0007">Acetylation</keyword>
<keyword id="KW-0963">Cytoplasm</keyword>
<keyword id="KW-0903">Direct protein sequencing</keyword>
<keyword id="KW-0479">Metal-binding</keyword>
<keyword id="KW-0520">NAD</keyword>
<keyword id="KW-0560">Oxidoreductase</keyword>
<keyword id="KW-1185">Reference proteome</keyword>
<keyword id="KW-0862">Zinc</keyword>
<sequence>ATAGQVIKCKAAVAWEAGKPLSLEEVEVAPPRAGEVRIKVVATGVCHTDAYTLSGSDPEGAFPVILGHEGAGLVESVGEGVTKFKAGDTVIPLYVPQCGECKFCKNPKTNLCQKIRVTQGRGLMPDNTSRFTCKGKQLFHFMGTSTFSEYTVVADISLANVDPKAPLDKVCLLGCGISTGYGAALNTAKVEPGSTCAVFGLGAVGLAAIMGCKVAGATRIIGVDINPEKFGKAAEFGATECLNPKDHARPVQEVLVEMTDGGVDYSFECIGNVEIMRSALEACHKGWGESVIIGVAGAGQEIATRPFQLVTGRVWKATAFGGWKSVESVPKLVEDYMNKKLKVDEFVTHTLPFDSINEGFDLMHAGKSIRCVLTF</sequence>
<protein>
    <recommendedName>
        <fullName>Alcohol dehydrogenase class-3 chain H</fullName>
        <ecNumber evidence="1">1.1.1.1</ecNumber>
    </recommendedName>
    <alternativeName>
        <fullName>Alcohol dehydrogenase class-III chain H</fullName>
    </alternativeName>
    <alternativeName>
        <fullName>Glutathione-dependent formaldehyde dehydrogenase</fullName>
        <shortName>FALDH</shortName>
        <shortName>FDH</shortName>
        <shortName>GSH-FDH</shortName>
        <ecNumber>1.1.1.-</ecNumber>
    </alternativeName>
    <alternativeName>
        <fullName>S-(hydroxymethyl)glutathione dehydrogenase</fullName>
        <ecNumber evidence="1">1.1.1.284</ecNumber>
    </alternativeName>
</protein>
<comment type="function">
    <text evidence="1">Class-III ADH is remarkably ineffective in oxidizing ethanol, but it readily catalyzes the oxidation of long-chain primary alcohols and the oxidation of S-(hydroxymethyl) glutathione.</text>
</comment>
<comment type="catalytic activity">
    <reaction evidence="1">
        <text>a primary alcohol + NAD(+) = an aldehyde + NADH + H(+)</text>
        <dbReference type="Rhea" id="RHEA:10736"/>
        <dbReference type="ChEBI" id="CHEBI:15378"/>
        <dbReference type="ChEBI" id="CHEBI:15734"/>
        <dbReference type="ChEBI" id="CHEBI:17478"/>
        <dbReference type="ChEBI" id="CHEBI:57540"/>
        <dbReference type="ChEBI" id="CHEBI:57945"/>
        <dbReference type="EC" id="1.1.1.1"/>
    </reaction>
</comment>
<comment type="catalytic activity">
    <reaction evidence="1">
        <text>a secondary alcohol + NAD(+) = a ketone + NADH + H(+)</text>
        <dbReference type="Rhea" id="RHEA:10740"/>
        <dbReference type="ChEBI" id="CHEBI:15378"/>
        <dbReference type="ChEBI" id="CHEBI:17087"/>
        <dbReference type="ChEBI" id="CHEBI:35681"/>
        <dbReference type="ChEBI" id="CHEBI:57540"/>
        <dbReference type="ChEBI" id="CHEBI:57945"/>
        <dbReference type="EC" id="1.1.1.1"/>
    </reaction>
</comment>
<comment type="catalytic activity">
    <reaction evidence="1">
        <text>S-(hydroxymethyl)glutathione + NADP(+) = S-formylglutathione + NADPH + H(+)</text>
        <dbReference type="Rhea" id="RHEA:19981"/>
        <dbReference type="ChEBI" id="CHEBI:15378"/>
        <dbReference type="ChEBI" id="CHEBI:57688"/>
        <dbReference type="ChEBI" id="CHEBI:57783"/>
        <dbReference type="ChEBI" id="CHEBI:58349"/>
        <dbReference type="ChEBI" id="CHEBI:58758"/>
        <dbReference type="EC" id="1.1.1.284"/>
    </reaction>
</comment>
<comment type="catalytic activity">
    <reaction evidence="1">
        <text>S-(hydroxymethyl)glutathione + NAD(+) = S-formylglutathione + NADH + H(+)</text>
        <dbReference type="Rhea" id="RHEA:19985"/>
        <dbReference type="ChEBI" id="CHEBI:15378"/>
        <dbReference type="ChEBI" id="CHEBI:57540"/>
        <dbReference type="ChEBI" id="CHEBI:57688"/>
        <dbReference type="ChEBI" id="CHEBI:57945"/>
        <dbReference type="ChEBI" id="CHEBI:58758"/>
        <dbReference type="EC" id="1.1.1.284"/>
    </reaction>
</comment>
<comment type="cofactor">
    <cofactor evidence="1">
        <name>Zn(2+)</name>
        <dbReference type="ChEBI" id="CHEBI:29105"/>
    </cofactor>
    <text evidence="1">Binds 2 Zn(2+) ions per subunit.</text>
</comment>
<comment type="subunit">
    <text evidence="3">Homodimer or heterodimer with L chain.</text>
</comment>
<comment type="subcellular location">
    <subcellularLocation>
        <location evidence="4">Cytoplasm</location>
    </subcellularLocation>
</comment>
<comment type="similarity">
    <text evidence="4">Belongs to the zinc-containing alcohol dehydrogenase family. Class-III subfamily.</text>
</comment>
<proteinExistence type="evidence at protein level"/>
<accession>P81600</accession>
<dbReference type="EC" id="1.1.1.1" evidence="1"/>
<dbReference type="EC" id="1.1.1.-"/>
<dbReference type="EC" id="1.1.1.284" evidence="1"/>
<dbReference type="SMR" id="P81600"/>
<dbReference type="STRING" id="8049.ENSGMOP00000013292"/>
<dbReference type="iPTMnet" id="P81600"/>
<dbReference type="Proteomes" id="UP000694546">
    <property type="component" value="Unplaced"/>
</dbReference>
<dbReference type="GO" id="GO:0005829">
    <property type="term" value="C:cytosol"/>
    <property type="evidence" value="ECO:0007669"/>
    <property type="project" value="TreeGrafter"/>
</dbReference>
<dbReference type="GO" id="GO:0004022">
    <property type="term" value="F:alcohol dehydrogenase (NAD+) activity"/>
    <property type="evidence" value="ECO:0007669"/>
    <property type="project" value="UniProtKB-EC"/>
</dbReference>
<dbReference type="GO" id="GO:0106322">
    <property type="term" value="F:S-(hydroxymethyl)glutathione dehydrogenase (NAD+) activity"/>
    <property type="evidence" value="ECO:0007669"/>
    <property type="project" value="RHEA"/>
</dbReference>
<dbReference type="GO" id="GO:0106321">
    <property type="term" value="F:S-(hydroxymethyl)glutathione dehydrogenase (NADP+) activity"/>
    <property type="evidence" value="ECO:0007669"/>
    <property type="project" value="RHEA"/>
</dbReference>
<dbReference type="GO" id="GO:0008270">
    <property type="term" value="F:zinc ion binding"/>
    <property type="evidence" value="ECO:0007669"/>
    <property type="project" value="InterPro"/>
</dbReference>
<dbReference type="GO" id="GO:0046294">
    <property type="term" value="P:formaldehyde catabolic process"/>
    <property type="evidence" value="ECO:0007669"/>
    <property type="project" value="InterPro"/>
</dbReference>
<dbReference type="CDD" id="cd08300">
    <property type="entry name" value="alcohol_DH_class_III"/>
    <property type="match status" value="1"/>
</dbReference>
<dbReference type="FunFam" id="3.40.50.720:FF:000003">
    <property type="entry name" value="S-(hydroxymethyl)glutathione dehydrogenase"/>
    <property type="match status" value="1"/>
</dbReference>
<dbReference type="FunFam" id="3.90.180.10:FF:000001">
    <property type="entry name" value="S-(hydroxymethyl)glutathione dehydrogenase"/>
    <property type="match status" value="1"/>
</dbReference>
<dbReference type="Gene3D" id="3.90.180.10">
    <property type="entry name" value="Medium-chain alcohol dehydrogenases, catalytic domain"/>
    <property type="match status" value="1"/>
</dbReference>
<dbReference type="Gene3D" id="3.40.50.720">
    <property type="entry name" value="NAD(P)-binding Rossmann-like Domain"/>
    <property type="match status" value="1"/>
</dbReference>
<dbReference type="InterPro" id="IPR013149">
    <property type="entry name" value="ADH-like_C"/>
</dbReference>
<dbReference type="InterPro" id="IPR013154">
    <property type="entry name" value="ADH-like_N"/>
</dbReference>
<dbReference type="InterPro" id="IPR014183">
    <property type="entry name" value="ADH_3"/>
</dbReference>
<dbReference type="InterPro" id="IPR002328">
    <property type="entry name" value="ADH_Zn_CS"/>
</dbReference>
<dbReference type="InterPro" id="IPR011032">
    <property type="entry name" value="GroES-like_sf"/>
</dbReference>
<dbReference type="InterPro" id="IPR036291">
    <property type="entry name" value="NAD(P)-bd_dom_sf"/>
</dbReference>
<dbReference type="InterPro" id="IPR020843">
    <property type="entry name" value="PKS_ER"/>
</dbReference>
<dbReference type="NCBIfam" id="TIGR02818">
    <property type="entry name" value="adh_III_F_hyde"/>
    <property type="match status" value="1"/>
</dbReference>
<dbReference type="PANTHER" id="PTHR43880">
    <property type="entry name" value="ALCOHOL DEHYDROGENASE"/>
    <property type="match status" value="1"/>
</dbReference>
<dbReference type="PANTHER" id="PTHR43880:SF21">
    <property type="entry name" value="S-(HYDROXYMETHYL)GLUTATHIONE DEHYDROGENASE"/>
    <property type="match status" value="1"/>
</dbReference>
<dbReference type="Pfam" id="PF08240">
    <property type="entry name" value="ADH_N"/>
    <property type="match status" value="1"/>
</dbReference>
<dbReference type="Pfam" id="PF00107">
    <property type="entry name" value="ADH_zinc_N"/>
    <property type="match status" value="1"/>
</dbReference>
<dbReference type="SMART" id="SM00829">
    <property type="entry name" value="PKS_ER"/>
    <property type="match status" value="1"/>
</dbReference>
<dbReference type="SUPFAM" id="SSF50129">
    <property type="entry name" value="GroES-like"/>
    <property type="match status" value="2"/>
</dbReference>
<dbReference type="SUPFAM" id="SSF51735">
    <property type="entry name" value="NAD(P)-binding Rossmann-fold domains"/>
    <property type="match status" value="1"/>
</dbReference>
<dbReference type="PROSITE" id="PS00059">
    <property type="entry name" value="ADH_ZINC"/>
    <property type="match status" value="1"/>
</dbReference>
<name>ADHH_GADMO</name>
<reference key="1">
    <citation type="journal article" date="1996" name="Biochemistry">
        <title>Isozyme multiplicity with anomalous dimer patterns in a class III alcohol dehydrogenase. Effects on the activity and quaternary structure of residue exchanges at 'non-functional' sites in a native protein.</title>
        <authorList>
            <person name="Danielsson O."/>
            <person name="Shafqat J."/>
            <person name="Estonius M."/>
            <person name="El-Ahmad M."/>
            <person name="Joernvall H."/>
        </authorList>
    </citation>
    <scope>PROTEIN SEQUENCE</scope>
    <scope>SUBUNIT</scope>
    <scope>ACETYLATION AT ALA-1</scope>
</reference>
<reference key="2">
    <citation type="journal article" date="1995" name="FEBS Lett.">
        <title>Multiplicity of N-terminal structures of medium-chain alcohol dehydrogenases. Mass-spectrometric analysis of plant, lower vertebrate and higher vertebrate class I, II, and III forms of the enzyme.</title>
        <authorList>
            <person name="Hjelmqvist L."/>
            <person name="Hackett M."/>
            <person name="Shafqat J."/>
            <person name="Danielsson O."/>
            <person name="Iida J."/>
            <person name="Hendrickson R.C."/>
            <person name="Michel H."/>
            <person name="Shabanowitz J."/>
            <person name="Hunt D.F."/>
            <person name="Joernvall H."/>
        </authorList>
    </citation>
    <scope>PARTIAL PROTEIN SEQUENCE</scope>
    <scope>ACETYLATION AT ALA-1</scope>
</reference>
<feature type="chain" id="PRO_0000160763" description="Alcohol dehydrogenase class-3 chain H">
    <location>
        <begin position="1"/>
        <end position="375"/>
    </location>
</feature>
<feature type="binding site" evidence="1">
    <location>
        <position position="46"/>
    </location>
    <ligand>
        <name>Zn(2+)</name>
        <dbReference type="ChEBI" id="CHEBI:29105"/>
        <label>1</label>
        <note>catalytic</note>
    </ligand>
</feature>
<feature type="binding site" evidence="1">
    <location>
        <position position="68"/>
    </location>
    <ligand>
        <name>Zn(2+)</name>
        <dbReference type="ChEBI" id="CHEBI:29105"/>
        <label>1</label>
        <note>catalytic</note>
    </ligand>
</feature>
<feature type="binding site" evidence="1">
    <location>
        <position position="98"/>
    </location>
    <ligand>
        <name>Zn(2+)</name>
        <dbReference type="ChEBI" id="CHEBI:29105"/>
        <label>2</label>
    </ligand>
</feature>
<feature type="binding site" evidence="1">
    <location>
        <position position="101"/>
    </location>
    <ligand>
        <name>Zn(2+)</name>
        <dbReference type="ChEBI" id="CHEBI:29105"/>
        <label>2</label>
    </ligand>
</feature>
<feature type="binding site" evidence="1">
    <location>
        <position position="104"/>
    </location>
    <ligand>
        <name>Zn(2+)</name>
        <dbReference type="ChEBI" id="CHEBI:29105"/>
        <label>2</label>
    </ligand>
</feature>
<feature type="binding site" evidence="1">
    <location>
        <position position="112"/>
    </location>
    <ligand>
        <name>Zn(2+)</name>
        <dbReference type="ChEBI" id="CHEBI:29105"/>
        <label>2</label>
    </ligand>
</feature>
<feature type="binding site" evidence="1">
    <location>
        <position position="175"/>
    </location>
    <ligand>
        <name>Zn(2+)</name>
        <dbReference type="ChEBI" id="CHEBI:29105"/>
        <label>1</label>
        <note>catalytic</note>
    </ligand>
</feature>
<feature type="site" description="Important for FDH activity and activation by fatty acids" evidence="1">
    <location>
        <position position="116"/>
    </location>
</feature>
<feature type="modified residue" description="N-acetylalanine" evidence="2 3">
    <location>
        <position position="1"/>
    </location>
</feature>
<organism>
    <name type="scientific">Gadus morhua</name>
    <name type="common">Atlantic cod</name>
    <dbReference type="NCBI Taxonomy" id="8049"/>
    <lineage>
        <taxon>Eukaryota</taxon>
        <taxon>Metazoa</taxon>
        <taxon>Chordata</taxon>
        <taxon>Craniata</taxon>
        <taxon>Vertebrata</taxon>
        <taxon>Euteleostomi</taxon>
        <taxon>Actinopterygii</taxon>
        <taxon>Neopterygii</taxon>
        <taxon>Teleostei</taxon>
        <taxon>Neoteleostei</taxon>
        <taxon>Acanthomorphata</taxon>
        <taxon>Zeiogadaria</taxon>
        <taxon>Gadariae</taxon>
        <taxon>Gadiformes</taxon>
        <taxon>Gadoidei</taxon>
        <taxon>Gadidae</taxon>
        <taxon>Gadus</taxon>
    </lineage>
</organism>